<keyword id="KW-0053">Apoptosis</keyword>
<keyword id="KW-0068">Autocatalytic cleavage</keyword>
<keyword id="KW-0106">Calcium</keyword>
<keyword id="KW-0153">Cholesterol metabolism</keyword>
<keyword id="KW-0963">Cytoplasm</keyword>
<keyword id="KW-1015">Disulfide bond</keyword>
<keyword id="KW-0256">Endoplasmic reticulum</keyword>
<keyword id="KW-0967">Endosome</keyword>
<keyword id="KW-0325">Glycoprotein</keyword>
<keyword id="KW-0333">Golgi apparatus</keyword>
<keyword id="KW-0378">Hydrolase</keyword>
<keyword id="KW-0443">Lipid metabolism</keyword>
<keyword id="KW-0458">Lysosome</keyword>
<keyword id="KW-0597">Phosphoprotein</keyword>
<keyword id="KW-0645">Protease</keyword>
<keyword id="KW-1185">Reference proteome</keyword>
<keyword id="KW-0964">Secreted</keyword>
<keyword id="KW-0720">Serine protease</keyword>
<keyword id="KW-0732">Signal</keyword>
<keyword id="KW-0753">Steroid metabolism</keyword>
<keyword id="KW-1207">Sterol metabolism</keyword>
<keyword id="KW-0765">Sulfation</keyword>
<keyword id="KW-0865">Zymogen</keyword>
<reference key="1">
    <citation type="journal article" date="2007" name="PLoS ONE">
        <title>Evidence for positive selection in the C-terminal domain of the cholesterol metabolism gene PCSK9 based on phylogenetic analysis in 14 primate species.</title>
        <authorList>
            <person name="Ding K."/>
            <person name="McDonough S.J."/>
            <person name="Kullo I.J."/>
        </authorList>
    </citation>
    <scope>NUCLEOTIDE SEQUENCE [MRNA]</scope>
</reference>
<comment type="function">
    <text evidence="1">Crucial player in the regulation of plasma cholesterol homeostasis. Binds to low-density lipid receptor family members: low density lipoprotein receptor (LDLR), very low density lipoprotein receptor (VLDLR), apolipoprotein E receptor (LRP1/APOER) and apolipoprotein receptor 2 (LRP8/APOER2), and promotes their degradation in intracellular acidic compartments. Acts via a non-proteolytic mechanism to enhance the degradation of the hepatic LDLR through a clathrin LDLRAP1/ARH-mediated pathway. May prevent the recycling of LDLR from endosomes to the cell surface or direct it to lysosomes for degradation. Can induce ubiquitination of LDLR leading to its subsequent degradation. Inhibits intracellular degradation of APOB via the autophagosome/lysosome pathway in a LDLR-independent manner. Involved in the disposal of non-acetylated intermediates of BACE1 in the early secretory pathway. Inhibits epithelial Na(+) channel (ENaC)-mediated Na(+) absorption by reducing ENaC surface expression primarily by increasing its proteasomal degradation. Regulates neuronal apoptosis via modulation of LRP8/APOER2 levels and related anti-apoptotic signaling pathways (By similarity).</text>
</comment>
<comment type="cofactor">
    <cofactor evidence="1">
        <name>Ca(2+)</name>
        <dbReference type="ChEBI" id="CHEBI:29108"/>
    </cofactor>
</comment>
<comment type="activity regulation">
    <text evidence="1">Its proteolytic activity is autoinhibited by the non-covalent binding of the propeptide to the catalytic domain. Inhibited by EGTA (By similarity).</text>
</comment>
<comment type="subunit">
    <text evidence="2">Monomer. Can self-associate to form dimers and higher multimers which may have increased LDLR degrading activity. The precursor protein but not the mature protein may form multimers. Interacts with APOB, VLDLR, LRP8/APOER2 and BACE1. The full-length immature form (pro-PCSK9) interacts with SCNN1A, SCNN1B and SCNN1G. The pro-PCSK9 form (via C-terminal domain) interacts with LDLR. Interacts (via the C-terminal domain) with ANXA2 (via repeat Annexin 1); the interaction inhibits the degradation of LDLR.</text>
</comment>
<comment type="subcellular location">
    <subcellularLocation>
        <location evidence="1">Cytoplasm</location>
    </subcellularLocation>
    <subcellularLocation>
        <location evidence="1">Secreted</location>
    </subcellularLocation>
    <subcellularLocation>
        <location evidence="1">Endosome</location>
    </subcellularLocation>
    <subcellularLocation>
        <location evidence="1">Lysosome</location>
    </subcellularLocation>
    <subcellularLocation>
        <location evidence="1">Cell surface</location>
    </subcellularLocation>
    <subcellularLocation>
        <location evidence="1">Endoplasmic reticulum</location>
    </subcellularLocation>
    <subcellularLocation>
        <location evidence="1">Golgi apparatus</location>
    </subcellularLocation>
    <text evidence="1">Autocatalytic cleavage is required to transport it from the endoplasmic reticulum to the Golgi apparatus and for the secretion of the mature protein. Localizes to the endoplasmic reticulum in the absence of LDLR and colocalizes to the cell surface and to the endosomes/lysosomes in the presence of LDLR. The sorting to the cell surface and endosomes is required in order to fully promote LDLR degradation (By similarity).</text>
</comment>
<comment type="domain">
    <text evidence="1">The C-terminal domain (CRD) is essential for the LDLR-binding and degrading activities.</text>
</comment>
<comment type="domain">
    <text evidence="1">The catalytic domain is responsible for mediating its self-association.</text>
</comment>
<comment type="PTM">
    <text evidence="1">Cleavage by furin and PCSK5 generates a truncated inactive protein that is unable to induce LDLR degradation.</text>
</comment>
<comment type="PTM">
    <text evidence="1">Undergoes autocatalytic cleavage in the endoplasmic reticulum to release the propeptide from the N-terminus and the cleavage of the propeptide is strictly required for its maturation and activation. The cleaved propeptide however remains associated with the catalytic domain through non-covalent interactions, preventing potential substrates from accessing its active site. As a result, it is secreted from cells as a propeptide-containing, enzymatically inactive protein (By similarity).</text>
</comment>
<comment type="PTM">
    <text evidence="1">Phosphorylation protects the propeptide against proteolysis.</text>
</comment>
<comment type="similarity">
    <text evidence="5">Belongs to the peptidase S8 family.</text>
</comment>
<proteinExistence type="evidence at transcript level"/>
<gene>
    <name type="primary">PCSK9</name>
</gene>
<accession>A8T695</accession>
<organism>
    <name type="scientific">Saimiri boliviensis boliviensis</name>
    <name type="common">Bolivian squirrel monkey</name>
    <dbReference type="NCBI Taxonomy" id="39432"/>
    <lineage>
        <taxon>Eukaryota</taxon>
        <taxon>Metazoa</taxon>
        <taxon>Chordata</taxon>
        <taxon>Craniata</taxon>
        <taxon>Vertebrata</taxon>
        <taxon>Euteleostomi</taxon>
        <taxon>Mammalia</taxon>
        <taxon>Eutheria</taxon>
        <taxon>Euarchontoglires</taxon>
        <taxon>Primates</taxon>
        <taxon>Haplorrhini</taxon>
        <taxon>Platyrrhini</taxon>
        <taxon>Cebidae</taxon>
        <taxon>Saimiriinae</taxon>
        <taxon>Saimiri</taxon>
    </lineage>
</organism>
<evidence type="ECO:0000250" key="1"/>
<evidence type="ECO:0000250" key="2">
    <source>
        <dbReference type="UniProtKB" id="Q8NBP7"/>
    </source>
</evidence>
<evidence type="ECO:0000255" key="3"/>
<evidence type="ECO:0000255" key="4">
    <source>
        <dbReference type="PROSITE-ProRule" id="PRU01240"/>
    </source>
</evidence>
<evidence type="ECO:0000305" key="5"/>
<dbReference type="EC" id="3.4.21.-"/>
<dbReference type="EMBL" id="EF692507">
    <property type="protein sequence ID" value="ABV59227.1"/>
    <property type="molecule type" value="mRNA"/>
</dbReference>
<dbReference type="RefSeq" id="NP_001266928.1">
    <property type="nucleotide sequence ID" value="NM_001279999.1"/>
</dbReference>
<dbReference type="SMR" id="A8T695"/>
<dbReference type="STRING" id="39432.ENSSBOP00000027099"/>
<dbReference type="GlyCosmos" id="A8T695">
    <property type="glycosylation" value="1 site, No reported glycans"/>
</dbReference>
<dbReference type="Ensembl" id="ENSSBOT00000043975.1">
    <property type="protein sequence ID" value="ENSSBOP00000027099.1"/>
    <property type="gene ID" value="ENSSBOG00000029957.1"/>
</dbReference>
<dbReference type="GeneID" id="101049523"/>
<dbReference type="CTD" id="255738"/>
<dbReference type="GeneTree" id="ENSGT00490000043472"/>
<dbReference type="OMA" id="GEEMMGC"/>
<dbReference type="Proteomes" id="UP000233220">
    <property type="component" value="Unplaced"/>
</dbReference>
<dbReference type="GO" id="GO:0009986">
    <property type="term" value="C:cell surface"/>
    <property type="evidence" value="ECO:0000250"/>
    <property type="project" value="UniProtKB"/>
</dbReference>
<dbReference type="GO" id="GO:0030134">
    <property type="term" value="C:COPII-coated ER to Golgi transport vesicle"/>
    <property type="evidence" value="ECO:0007669"/>
    <property type="project" value="Ensembl"/>
</dbReference>
<dbReference type="GO" id="GO:0005737">
    <property type="term" value="C:cytoplasm"/>
    <property type="evidence" value="ECO:0000250"/>
    <property type="project" value="UniProtKB"/>
</dbReference>
<dbReference type="GO" id="GO:0005769">
    <property type="term" value="C:early endosome"/>
    <property type="evidence" value="ECO:0000250"/>
    <property type="project" value="UniProtKB"/>
</dbReference>
<dbReference type="GO" id="GO:0005783">
    <property type="term" value="C:endoplasmic reticulum"/>
    <property type="evidence" value="ECO:0000250"/>
    <property type="project" value="UniProtKB"/>
</dbReference>
<dbReference type="GO" id="GO:0005615">
    <property type="term" value="C:extracellular space"/>
    <property type="evidence" value="ECO:0007669"/>
    <property type="project" value="Ensembl"/>
</dbReference>
<dbReference type="GO" id="GO:0005794">
    <property type="term" value="C:Golgi apparatus"/>
    <property type="evidence" value="ECO:0000250"/>
    <property type="project" value="UniProtKB"/>
</dbReference>
<dbReference type="GO" id="GO:0005770">
    <property type="term" value="C:late endosome"/>
    <property type="evidence" value="ECO:0000250"/>
    <property type="project" value="UniProtKB"/>
</dbReference>
<dbReference type="GO" id="GO:0005764">
    <property type="term" value="C:lysosome"/>
    <property type="evidence" value="ECO:0000250"/>
    <property type="project" value="UniProtKB"/>
</dbReference>
<dbReference type="GO" id="GO:1990667">
    <property type="term" value="C:PCSK9-AnxA2 complex"/>
    <property type="evidence" value="ECO:0007669"/>
    <property type="project" value="Ensembl"/>
</dbReference>
<dbReference type="GO" id="GO:1990666">
    <property type="term" value="C:PCSK9-LDLR complex"/>
    <property type="evidence" value="ECO:0007669"/>
    <property type="project" value="Ensembl"/>
</dbReference>
<dbReference type="GO" id="GO:0048471">
    <property type="term" value="C:perinuclear region of cytoplasm"/>
    <property type="evidence" value="ECO:0007669"/>
    <property type="project" value="Ensembl"/>
</dbReference>
<dbReference type="GO" id="GO:0005886">
    <property type="term" value="C:plasma membrane"/>
    <property type="evidence" value="ECO:0007669"/>
    <property type="project" value="Ensembl"/>
</dbReference>
<dbReference type="GO" id="GO:0034185">
    <property type="term" value="F:apolipoprotein binding"/>
    <property type="evidence" value="ECO:0000250"/>
    <property type="project" value="UniProtKB"/>
</dbReference>
<dbReference type="GO" id="GO:0034190">
    <property type="term" value="F:apolipoprotein receptor binding"/>
    <property type="evidence" value="ECO:0007669"/>
    <property type="project" value="Ensembl"/>
</dbReference>
<dbReference type="GO" id="GO:0030169">
    <property type="term" value="F:low-density lipoprotein particle binding"/>
    <property type="evidence" value="ECO:0000250"/>
    <property type="project" value="UniProtKB"/>
</dbReference>
<dbReference type="GO" id="GO:0050750">
    <property type="term" value="F:low-density lipoprotein particle receptor binding"/>
    <property type="evidence" value="ECO:0007669"/>
    <property type="project" value="Ensembl"/>
</dbReference>
<dbReference type="GO" id="GO:0004252">
    <property type="term" value="F:serine-type endopeptidase activity"/>
    <property type="evidence" value="ECO:0007669"/>
    <property type="project" value="Ensembl"/>
</dbReference>
<dbReference type="GO" id="GO:0030547">
    <property type="term" value="F:signaling receptor inhibitor activity"/>
    <property type="evidence" value="ECO:0007669"/>
    <property type="project" value="Ensembl"/>
</dbReference>
<dbReference type="GO" id="GO:0019871">
    <property type="term" value="F:sodium channel inhibitor activity"/>
    <property type="evidence" value="ECO:0007669"/>
    <property type="project" value="Ensembl"/>
</dbReference>
<dbReference type="GO" id="GO:0034189">
    <property type="term" value="F:very-low-density lipoprotein particle binding"/>
    <property type="evidence" value="ECO:0000250"/>
    <property type="project" value="UniProtKB"/>
</dbReference>
<dbReference type="GO" id="GO:0070326">
    <property type="term" value="F:very-low-density lipoprotein particle receptor binding"/>
    <property type="evidence" value="ECO:0007669"/>
    <property type="project" value="Ensembl"/>
</dbReference>
<dbReference type="GO" id="GO:0006915">
    <property type="term" value="P:apoptotic process"/>
    <property type="evidence" value="ECO:0007669"/>
    <property type="project" value="UniProtKB-KW"/>
</dbReference>
<dbReference type="GO" id="GO:0032869">
    <property type="term" value="P:cellular response to insulin stimulus"/>
    <property type="evidence" value="ECO:0007669"/>
    <property type="project" value="Ensembl"/>
</dbReference>
<dbReference type="GO" id="GO:0009267">
    <property type="term" value="P:cellular response to starvation"/>
    <property type="evidence" value="ECO:0007669"/>
    <property type="project" value="Ensembl"/>
</dbReference>
<dbReference type="GO" id="GO:0042632">
    <property type="term" value="P:cholesterol homeostasis"/>
    <property type="evidence" value="ECO:0007669"/>
    <property type="project" value="Ensembl"/>
</dbReference>
<dbReference type="GO" id="GO:0008203">
    <property type="term" value="P:cholesterol metabolic process"/>
    <property type="evidence" value="ECO:0007669"/>
    <property type="project" value="UniProtKB-KW"/>
</dbReference>
<dbReference type="GO" id="GO:0001822">
    <property type="term" value="P:kidney development"/>
    <property type="evidence" value="ECO:0007669"/>
    <property type="project" value="Ensembl"/>
</dbReference>
<dbReference type="GO" id="GO:0042157">
    <property type="term" value="P:lipoprotein metabolic process"/>
    <property type="evidence" value="ECO:0007669"/>
    <property type="project" value="Ensembl"/>
</dbReference>
<dbReference type="GO" id="GO:0001889">
    <property type="term" value="P:liver development"/>
    <property type="evidence" value="ECO:0007669"/>
    <property type="project" value="Ensembl"/>
</dbReference>
<dbReference type="GO" id="GO:0032802">
    <property type="term" value="P:low-density lipoprotein particle receptor catabolic process"/>
    <property type="evidence" value="ECO:0000250"/>
    <property type="project" value="UniProtKB"/>
</dbReference>
<dbReference type="GO" id="GO:0007041">
    <property type="term" value="P:lysosomal transport"/>
    <property type="evidence" value="ECO:0007669"/>
    <property type="project" value="Ensembl"/>
</dbReference>
<dbReference type="GO" id="GO:0010989">
    <property type="term" value="P:negative regulation of low-density lipoprotein particle clearance"/>
    <property type="evidence" value="ECO:0007669"/>
    <property type="project" value="Ensembl"/>
</dbReference>
<dbReference type="GO" id="GO:0002091">
    <property type="term" value="P:negative regulation of receptor internalization"/>
    <property type="evidence" value="ECO:0007669"/>
    <property type="project" value="Ensembl"/>
</dbReference>
<dbReference type="GO" id="GO:0001920">
    <property type="term" value="P:negative regulation of receptor recycling"/>
    <property type="evidence" value="ECO:0007669"/>
    <property type="project" value="Ensembl"/>
</dbReference>
<dbReference type="GO" id="GO:1905601">
    <property type="term" value="P:negative regulation of receptor-mediated endocytosis involved in cholesterol transport"/>
    <property type="evidence" value="ECO:0007669"/>
    <property type="project" value="Ensembl"/>
</dbReference>
<dbReference type="GO" id="GO:0030182">
    <property type="term" value="P:neuron differentiation"/>
    <property type="evidence" value="ECO:0007669"/>
    <property type="project" value="Ensembl"/>
</dbReference>
<dbReference type="GO" id="GO:0006644">
    <property type="term" value="P:phospholipid metabolic process"/>
    <property type="evidence" value="ECO:0007669"/>
    <property type="project" value="Ensembl"/>
</dbReference>
<dbReference type="GO" id="GO:0032805">
    <property type="term" value="P:positive regulation of low-density lipoprotein particle receptor catabolic process"/>
    <property type="evidence" value="ECO:0007669"/>
    <property type="project" value="Ensembl"/>
</dbReference>
<dbReference type="GO" id="GO:0043525">
    <property type="term" value="P:positive regulation of neuron apoptotic process"/>
    <property type="evidence" value="ECO:0007669"/>
    <property type="project" value="Ensembl"/>
</dbReference>
<dbReference type="GO" id="GO:0002092">
    <property type="term" value="P:positive regulation of receptor internalization"/>
    <property type="evidence" value="ECO:0007669"/>
    <property type="project" value="Ensembl"/>
</dbReference>
<dbReference type="GO" id="GO:0016540">
    <property type="term" value="P:protein autoprocessing"/>
    <property type="evidence" value="ECO:0007669"/>
    <property type="project" value="Ensembl"/>
</dbReference>
<dbReference type="GO" id="GO:0043523">
    <property type="term" value="P:regulation of neuron apoptotic process"/>
    <property type="evidence" value="ECO:0000250"/>
    <property type="project" value="UniProtKB"/>
</dbReference>
<dbReference type="GO" id="GO:0006641">
    <property type="term" value="P:triglyceride metabolic process"/>
    <property type="evidence" value="ECO:0007669"/>
    <property type="project" value="Ensembl"/>
</dbReference>
<dbReference type="CDD" id="cd16839">
    <property type="entry name" value="PCSK9_C-CRD"/>
    <property type="match status" value="1"/>
</dbReference>
<dbReference type="CDD" id="cd04077">
    <property type="entry name" value="Peptidases_S8_PCSK9_ProteinaseK_like"/>
    <property type="match status" value="1"/>
</dbReference>
<dbReference type="FunFam" id="2.60.120.690:FF:000001">
    <property type="entry name" value="Proprotein convertase subtilisin/kexin type 9"/>
    <property type="match status" value="1"/>
</dbReference>
<dbReference type="FunFam" id="3.30.70.80:FF:000004">
    <property type="entry name" value="Proprotein convertase subtilisin/kexin type 9"/>
    <property type="match status" value="1"/>
</dbReference>
<dbReference type="FunFam" id="3.40.50.200:FF:000016">
    <property type="entry name" value="Proprotein convertase subtilisin/kexin type 9"/>
    <property type="match status" value="1"/>
</dbReference>
<dbReference type="Gene3D" id="3.30.70.80">
    <property type="entry name" value="Peptidase S8 propeptide/proteinase inhibitor I9"/>
    <property type="match status" value="1"/>
</dbReference>
<dbReference type="Gene3D" id="3.40.50.200">
    <property type="entry name" value="Peptidase S8/S53 domain"/>
    <property type="match status" value="1"/>
</dbReference>
<dbReference type="Gene3D" id="2.60.120.690">
    <property type="entry name" value="Proprotein convertase subtilisin/kexin type 9"/>
    <property type="match status" value="1"/>
</dbReference>
<dbReference type="InterPro" id="IPR041254">
    <property type="entry name" value="PCSK9_C1"/>
</dbReference>
<dbReference type="InterPro" id="IPR041052">
    <property type="entry name" value="PCSK9_C2"/>
</dbReference>
<dbReference type="InterPro" id="IPR041051">
    <property type="entry name" value="PCSK9_C3"/>
</dbReference>
<dbReference type="InterPro" id="IPR034193">
    <property type="entry name" value="PCSK9_ProteinaseK-like"/>
</dbReference>
<dbReference type="InterPro" id="IPR000209">
    <property type="entry name" value="Peptidase_S8/S53_dom"/>
</dbReference>
<dbReference type="InterPro" id="IPR036852">
    <property type="entry name" value="Peptidase_S8/S53_dom_sf"/>
</dbReference>
<dbReference type="InterPro" id="IPR050131">
    <property type="entry name" value="Peptidase_S8_subtilisin-like"/>
</dbReference>
<dbReference type="InterPro" id="IPR015500">
    <property type="entry name" value="Peptidase_S8_subtilisin-rel"/>
</dbReference>
<dbReference type="InterPro" id="IPR010259">
    <property type="entry name" value="S8pro/Inhibitor_I9"/>
</dbReference>
<dbReference type="InterPro" id="IPR037045">
    <property type="entry name" value="S8pro/Inhibitor_I9_sf"/>
</dbReference>
<dbReference type="PANTHER" id="PTHR43806">
    <property type="entry name" value="PEPTIDASE S8"/>
    <property type="match status" value="1"/>
</dbReference>
<dbReference type="PANTHER" id="PTHR43806:SF60">
    <property type="entry name" value="PROPROTEIN CONVERTASE SUBTILISIN_KEXIN TYPE 9"/>
    <property type="match status" value="1"/>
</dbReference>
<dbReference type="Pfam" id="PF05922">
    <property type="entry name" value="Inhibitor_I9"/>
    <property type="match status" value="1"/>
</dbReference>
<dbReference type="Pfam" id="PF18459">
    <property type="entry name" value="PCSK9_C1"/>
    <property type="match status" value="1"/>
</dbReference>
<dbReference type="Pfam" id="PF18464">
    <property type="entry name" value="PCSK9_C2"/>
    <property type="match status" value="1"/>
</dbReference>
<dbReference type="Pfam" id="PF18463">
    <property type="entry name" value="PCSK9_C3"/>
    <property type="match status" value="1"/>
</dbReference>
<dbReference type="Pfam" id="PF00082">
    <property type="entry name" value="Peptidase_S8"/>
    <property type="match status" value="1"/>
</dbReference>
<dbReference type="PRINTS" id="PR00723">
    <property type="entry name" value="SUBTILISIN"/>
</dbReference>
<dbReference type="SUPFAM" id="SSF54897">
    <property type="entry name" value="Protease propeptides/inhibitors"/>
    <property type="match status" value="1"/>
</dbReference>
<dbReference type="SUPFAM" id="SSF52743">
    <property type="entry name" value="Subtilisin-like"/>
    <property type="match status" value="1"/>
</dbReference>
<dbReference type="PROSITE" id="PS51892">
    <property type="entry name" value="SUBTILASE"/>
    <property type="match status" value="1"/>
</dbReference>
<sequence>MGTVSSRRLWWPLPLLLLLLLLGPAGARAQEDDDGDYEELVLALRSEEDGLADALQHGATATFHRCAKEPWRLPGTYVVVLKEETHRSQPERTARRLQAQAARRGYLIKLLHVFHDLLPGFLVKMSRDLLELALKLPHVDYIEEDSSVFAQSIPWNLERITPARYRADEYQPPNGGSLVEVYLLDTSIQSGHREIEGRVMVTDFGSVPEEDGTRFHRQASKCDSHGTHLAGVVSGRDAGVAKGASLRSLRVLNCQGKGTVSSTLIGLEFIRKSQLVQPVGPLVVLLPLAGGYSRVLNAACQRLARAGVVLVAAAGNFRDDACLYSPASAPEVITVGATNAQDQPVTLGTLGTNFGRCVDLFAPGEDIIGASSDCSTCFVSRSGTSQAAAHVAGIAAVMLSAEPELTLAELRQRLIHFSAKDVINEAWFPEDQRVLTPNLVAALPPSTHGAGWQLFCRTVWSAHSGPTRMATAMARCAPDEELLSCSSFSSSGKRRGERIEAQGGRRVCLAHNAFGGKGVYAIARCCLLPQANCSIHTAPPAGASMGTRAHCHQQGHVLTGCSAHWEVEELGTHKPPVLRPGGQPSQCMGHSGASTHATCCHAPGLECKVKEHGLPAPQEQVTVACEEGWTLTGCSALPGTSHILGAYAVDDTCVVRSQDVSTTGSTSEEAVAAVAICCRSRHLAQASQELQ</sequence>
<name>PCSK9_SAIBB</name>
<protein>
    <recommendedName>
        <fullName>Proprotein convertase subtilisin/kexin type 9</fullName>
        <ecNumber>3.4.21.-</ecNumber>
    </recommendedName>
    <alternativeName>
        <fullName>Proprotein convertase 9</fullName>
        <shortName>PC9</shortName>
    </alternativeName>
    <alternativeName>
        <fullName>Subtilisin/kexin-like protease PC9</fullName>
    </alternativeName>
</protein>
<feature type="signal peptide" evidence="1">
    <location>
        <begin position="1"/>
        <end position="29"/>
    </location>
</feature>
<feature type="propeptide" id="PRO_0000318296" evidence="1">
    <location>
        <begin position="30"/>
        <end position="151"/>
    </location>
</feature>
<feature type="chain" id="PRO_0000318297" description="Proprotein convertase subtilisin/kexin type 9">
    <location>
        <begin position="152"/>
        <end position="691"/>
    </location>
</feature>
<feature type="domain" description="Inhibitor I9" evidence="3">
    <location>
        <begin position="76"/>
        <end position="148"/>
    </location>
</feature>
<feature type="domain" description="Peptidase S8" evidence="4">
    <location>
        <begin position="154"/>
        <end position="460"/>
    </location>
</feature>
<feature type="region of interest" description="C-terminal domain" evidence="1">
    <location>
        <begin position="449"/>
        <end position="691"/>
    </location>
</feature>
<feature type="active site" description="Charge relay system" evidence="4">
    <location>
        <position position="185"/>
    </location>
</feature>
<feature type="active site" description="Charge relay system" evidence="4">
    <location>
        <position position="225"/>
    </location>
</feature>
<feature type="active site" description="Charge relay system" evidence="4">
    <location>
        <position position="385"/>
    </location>
</feature>
<feature type="site" description="Cleavage; by autolysis" evidence="1">
    <location>
        <begin position="151"/>
        <end position="152"/>
    </location>
</feature>
<feature type="site" description="Cleavage; by furin and PCSK5" evidence="1">
    <location>
        <begin position="217"/>
        <end position="218"/>
    </location>
</feature>
<feature type="modified residue" description="Sulfotyrosine" evidence="1">
    <location>
        <position position="37"/>
    </location>
</feature>
<feature type="modified residue" description="Phosphoserine" evidence="2">
    <location>
        <position position="46"/>
    </location>
</feature>
<feature type="modified residue" description="Phosphoserine" evidence="2">
    <location>
        <position position="687"/>
    </location>
</feature>
<feature type="glycosylation site" description="N-linked (GlcNAc...) asparagine" evidence="3">
    <location>
        <position position="532"/>
    </location>
</feature>
<feature type="disulfide bond" evidence="3">
    <location>
        <begin position="222"/>
        <end position="254"/>
    </location>
</feature>
<feature type="disulfide bond" evidence="3">
    <location>
        <begin position="322"/>
        <end position="357"/>
    </location>
</feature>
<feature type="disulfide bond" evidence="3">
    <location>
        <begin position="456"/>
        <end position="526"/>
    </location>
</feature>
<feature type="disulfide bond" evidence="3">
    <location>
        <begin position="476"/>
        <end position="525"/>
    </location>
</feature>
<feature type="disulfide bond" evidence="3">
    <location>
        <begin position="485"/>
        <end position="508"/>
    </location>
</feature>
<feature type="disulfide bond" evidence="3">
    <location>
        <begin position="533"/>
        <end position="600"/>
    </location>
</feature>
<feature type="disulfide bond" evidence="3">
    <location>
        <begin position="551"/>
        <end position="599"/>
    </location>
</feature>
<feature type="disulfide bond" evidence="3">
    <location>
        <begin position="561"/>
        <end position="587"/>
    </location>
</feature>
<feature type="disulfide bond" evidence="3">
    <location>
        <begin position="607"/>
        <end position="678"/>
    </location>
</feature>
<feature type="disulfide bond" evidence="3">
    <location>
        <begin position="625"/>
        <end position="677"/>
    </location>
</feature>
<feature type="disulfide bond" evidence="3">
    <location>
        <begin position="634"/>
        <end position="653"/>
    </location>
</feature>